<organism>
    <name type="scientific">Crocosphaera subtropica (strain ATCC 51142 / BH68)</name>
    <name type="common">Cyanothece sp. (strain ATCC 51142)</name>
    <dbReference type="NCBI Taxonomy" id="43989"/>
    <lineage>
        <taxon>Bacteria</taxon>
        <taxon>Bacillati</taxon>
        <taxon>Cyanobacteriota</taxon>
        <taxon>Cyanophyceae</taxon>
        <taxon>Oscillatoriophycideae</taxon>
        <taxon>Chroococcales</taxon>
        <taxon>Aphanothecaceae</taxon>
        <taxon>Crocosphaera</taxon>
        <taxon>Crocosphaera subtropica</taxon>
    </lineage>
</organism>
<comment type="catalytic activity">
    <reaction evidence="1">
        <text>1-(2-carboxyphenylamino)-1-deoxy-D-ribulose 5-phosphate + H(+) = (1S,2R)-1-C-(indol-3-yl)glycerol 3-phosphate + CO2 + H2O</text>
        <dbReference type="Rhea" id="RHEA:23476"/>
        <dbReference type="ChEBI" id="CHEBI:15377"/>
        <dbReference type="ChEBI" id="CHEBI:15378"/>
        <dbReference type="ChEBI" id="CHEBI:16526"/>
        <dbReference type="ChEBI" id="CHEBI:58613"/>
        <dbReference type="ChEBI" id="CHEBI:58866"/>
        <dbReference type="EC" id="4.1.1.48"/>
    </reaction>
</comment>
<comment type="pathway">
    <text evidence="1">Amino-acid biosynthesis; L-tryptophan biosynthesis; L-tryptophan from chorismate: step 4/5.</text>
</comment>
<comment type="similarity">
    <text evidence="1">Belongs to the TrpC family.</text>
</comment>
<gene>
    <name evidence="1" type="primary">trpC</name>
    <name type="ordered locus">cce_2305</name>
</gene>
<keyword id="KW-0028">Amino-acid biosynthesis</keyword>
<keyword id="KW-0057">Aromatic amino acid biosynthesis</keyword>
<keyword id="KW-0210">Decarboxylase</keyword>
<keyword id="KW-0456">Lyase</keyword>
<keyword id="KW-1185">Reference proteome</keyword>
<keyword id="KW-0822">Tryptophan biosynthesis</keyword>
<reference key="1">
    <citation type="journal article" date="2008" name="Proc. Natl. Acad. Sci. U.S.A.">
        <title>The genome of Cyanothece 51142, a unicellular diazotrophic cyanobacterium important in the marine nitrogen cycle.</title>
        <authorList>
            <person name="Welsh E.A."/>
            <person name="Liberton M."/>
            <person name="Stoeckel J."/>
            <person name="Loh T."/>
            <person name="Elvitigala T."/>
            <person name="Wang C."/>
            <person name="Wollam A."/>
            <person name="Fulton R.S."/>
            <person name="Clifton S.W."/>
            <person name="Jacobs J.M."/>
            <person name="Aurora R."/>
            <person name="Ghosh B.K."/>
            <person name="Sherman L.A."/>
            <person name="Smith R.D."/>
            <person name="Wilson R.K."/>
            <person name="Pakrasi H.B."/>
        </authorList>
    </citation>
    <scope>NUCLEOTIDE SEQUENCE [LARGE SCALE GENOMIC DNA]</scope>
    <source>
        <strain>ATCC 51142 / BH68</strain>
    </source>
</reference>
<sequence>MQIRRRPPNPAVEVDILRYQVPDPNGKANHILEEIVWHKEKEVERMRDRLSLLDLRKQEQSAPPAKDFLGAISQGKTQPALIAEVKKASPSKGVIREDFEPVAIAQAYVQGGASCLSVLTDSKFFQGSFDNLALVRQAVDIPLLCKEFIIYPYQIYLARVKGADAILLIAAILKDSDLQYLIKIIHGLGMTPLVEVHSLAELDRVLAIEGVSLVGINNRNLETFEVSLETTTNLITARQDEIKERGIYIVSESGIHTPQHLQQVTEAGANAVLIGESLVKQDDPTQAIANLFSF</sequence>
<dbReference type="EC" id="4.1.1.48" evidence="1"/>
<dbReference type="EMBL" id="CP000806">
    <property type="protein sequence ID" value="ACB51655.1"/>
    <property type="molecule type" value="Genomic_DNA"/>
</dbReference>
<dbReference type="RefSeq" id="WP_009544995.1">
    <property type="nucleotide sequence ID" value="NC_010546.1"/>
</dbReference>
<dbReference type="SMR" id="B1WQE4"/>
<dbReference type="STRING" id="43989.cce_2305"/>
<dbReference type="KEGG" id="cyt:cce_2305"/>
<dbReference type="eggNOG" id="COG0134">
    <property type="taxonomic scope" value="Bacteria"/>
</dbReference>
<dbReference type="HOGENOM" id="CLU_034247_1_0_3"/>
<dbReference type="OrthoDB" id="9804217at2"/>
<dbReference type="UniPathway" id="UPA00035">
    <property type="reaction ID" value="UER00043"/>
</dbReference>
<dbReference type="Proteomes" id="UP000001203">
    <property type="component" value="Chromosome circular"/>
</dbReference>
<dbReference type="GO" id="GO:0004425">
    <property type="term" value="F:indole-3-glycerol-phosphate synthase activity"/>
    <property type="evidence" value="ECO:0007669"/>
    <property type="project" value="UniProtKB-UniRule"/>
</dbReference>
<dbReference type="GO" id="GO:0004640">
    <property type="term" value="F:phosphoribosylanthranilate isomerase activity"/>
    <property type="evidence" value="ECO:0007669"/>
    <property type="project" value="TreeGrafter"/>
</dbReference>
<dbReference type="GO" id="GO:0000162">
    <property type="term" value="P:L-tryptophan biosynthetic process"/>
    <property type="evidence" value="ECO:0007669"/>
    <property type="project" value="UniProtKB-UniRule"/>
</dbReference>
<dbReference type="CDD" id="cd00331">
    <property type="entry name" value="IGPS"/>
    <property type="match status" value="1"/>
</dbReference>
<dbReference type="FunFam" id="3.20.20.70:FF:000024">
    <property type="entry name" value="Indole-3-glycerol phosphate synthase"/>
    <property type="match status" value="1"/>
</dbReference>
<dbReference type="Gene3D" id="3.20.20.70">
    <property type="entry name" value="Aldolase class I"/>
    <property type="match status" value="1"/>
</dbReference>
<dbReference type="HAMAP" id="MF_00134_B">
    <property type="entry name" value="IGPS_B"/>
    <property type="match status" value="1"/>
</dbReference>
<dbReference type="InterPro" id="IPR013785">
    <property type="entry name" value="Aldolase_TIM"/>
</dbReference>
<dbReference type="InterPro" id="IPR045186">
    <property type="entry name" value="Indole-3-glycerol_P_synth"/>
</dbReference>
<dbReference type="InterPro" id="IPR013798">
    <property type="entry name" value="Indole-3-glycerol_P_synth_dom"/>
</dbReference>
<dbReference type="InterPro" id="IPR001468">
    <property type="entry name" value="Indole-3-GlycerolPSynthase_CS"/>
</dbReference>
<dbReference type="InterPro" id="IPR011060">
    <property type="entry name" value="RibuloseP-bd_barrel"/>
</dbReference>
<dbReference type="NCBIfam" id="NF001372">
    <property type="entry name" value="PRK00278.1-4"/>
    <property type="match status" value="1"/>
</dbReference>
<dbReference type="NCBIfam" id="NF001377">
    <property type="entry name" value="PRK00278.2-4"/>
    <property type="match status" value="1"/>
</dbReference>
<dbReference type="PANTHER" id="PTHR22854:SF2">
    <property type="entry name" value="INDOLE-3-GLYCEROL-PHOSPHATE SYNTHASE"/>
    <property type="match status" value="1"/>
</dbReference>
<dbReference type="PANTHER" id="PTHR22854">
    <property type="entry name" value="TRYPTOPHAN BIOSYNTHESIS PROTEIN"/>
    <property type="match status" value="1"/>
</dbReference>
<dbReference type="Pfam" id="PF00218">
    <property type="entry name" value="IGPS"/>
    <property type="match status" value="1"/>
</dbReference>
<dbReference type="SUPFAM" id="SSF51366">
    <property type="entry name" value="Ribulose-phoshate binding barrel"/>
    <property type="match status" value="1"/>
</dbReference>
<dbReference type="PROSITE" id="PS00614">
    <property type="entry name" value="IGPS"/>
    <property type="match status" value="1"/>
</dbReference>
<protein>
    <recommendedName>
        <fullName evidence="1">Indole-3-glycerol phosphate synthase</fullName>
        <shortName evidence="1">IGPS</shortName>
        <ecNumber evidence="1">4.1.1.48</ecNumber>
    </recommendedName>
</protein>
<evidence type="ECO:0000255" key="1">
    <source>
        <dbReference type="HAMAP-Rule" id="MF_00134"/>
    </source>
</evidence>
<name>TRPC_CROS5</name>
<proteinExistence type="inferred from homology"/>
<feature type="chain" id="PRO_1000095863" description="Indole-3-glycerol phosphate synthase">
    <location>
        <begin position="1"/>
        <end position="294"/>
    </location>
</feature>
<accession>B1WQE4</accession>